<organism>
    <name type="scientific">Bacillus anthracis</name>
    <dbReference type="NCBI Taxonomy" id="1392"/>
    <lineage>
        <taxon>Bacteria</taxon>
        <taxon>Bacillati</taxon>
        <taxon>Bacillota</taxon>
        <taxon>Bacilli</taxon>
        <taxon>Bacillales</taxon>
        <taxon>Bacillaceae</taxon>
        <taxon>Bacillus</taxon>
        <taxon>Bacillus cereus group</taxon>
    </lineage>
</organism>
<sequence length="119" mass="13662">MQNKIQVKSVEKRENALIFCAENSEIEVKGLSARNHVLVDSDNLSFLYILENESSFIYVSIPHTCWEAMNNDVVMFVRVNDIEMELEGLKEEVEYLVENIEGNANYGEELVTAVEKVFL</sequence>
<dbReference type="EMBL" id="AE016879">
    <property type="protein sequence ID" value="AAP25172.1"/>
    <property type="molecule type" value="Genomic_DNA"/>
</dbReference>
<dbReference type="EMBL" id="AE017334">
    <property type="protein sequence ID" value="AAT30297.1"/>
    <property type="molecule type" value="Genomic_DNA"/>
</dbReference>
<dbReference type="EMBL" id="AE017225">
    <property type="protein sequence ID" value="AAT53441.1"/>
    <property type="molecule type" value="Genomic_DNA"/>
</dbReference>
<dbReference type="RefSeq" id="NP_843686.1">
    <property type="nucleotide sequence ID" value="NC_003997.3"/>
</dbReference>
<dbReference type="RefSeq" id="WP_001180010.1">
    <property type="nucleotide sequence ID" value="NZ_WXXJ01000044.1"/>
</dbReference>
<dbReference type="RefSeq" id="YP_027390.1">
    <property type="nucleotide sequence ID" value="NC_005945.1"/>
</dbReference>
<dbReference type="STRING" id="261594.GBAA_1211"/>
<dbReference type="DNASU" id="1084204"/>
<dbReference type="GeneID" id="45021215"/>
<dbReference type="KEGG" id="ban:BA_1211"/>
<dbReference type="KEGG" id="banh:HYU01_06225"/>
<dbReference type="KEGG" id="bar:GBAA_1211"/>
<dbReference type="KEGG" id="bat:BAS1118"/>
<dbReference type="PATRIC" id="fig|198094.11.peg.1187"/>
<dbReference type="eggNOG" id="ENOG5032YMN">
    <property type="taxonomic scope" value="Bacteria"/>
</dbReference>
<dbReference type="HOGENOM" id="CLU_142282_0_0_9"/>
<dbReference type="OMA" id="DSDHFAF"/>
<dbReference type="OrthoDB" id="2966478at2"/>
<dbReference type="Proteomes" id="UP000000427">
    <property type="component" value="Chromosome"/>
</dbReference>
<dbReference type="Proteomes" id="UP000000594">
    <property type="component" value="Chromosome"/>
</dbReference>
<dbReference type="HAMAP" id="MF_01861">
    <property type="entry name" value="UPF0738"/>
    <property type="match status" value="1"/>
</dbReference>
<dbReference type="InterPro" id="IPR020908">
    <property type="entry name" value="UPF0738"/>
</dbReference>
<dbReference type="Pfam" id="PF19785">
    <property type="entry name" value="UPF0738"/>
    <property type="match status" value="1"/>
</dbReference>
<feature type="chain" id="PRO_0000369637" description="UPF0738 protein BA_1211/GBAA_1211/BAS1118">
    <location>
        <begin position="1"/>
        <end position="119"/>
    </location>
</feature>
<comment type="similarity">
    <text evidence="1">Belongs to the UPF0738 family.</text>
</comment>
<keyword id="KW-1185">Reference proteome</keyword>
<reference key="1">
    <citation type="journal article" date="2003" name="Nature">
        <title>The genome sequence of Bacillus anthracis Ames and comparison to closely related bacteria.</title>
        <authorList>
            <person name="Read T.D."/>
            <person name="Peterson S.N."/>
            <person name="Tourasse N.J."/>
            <person name="Baillie L.W."/>
            <person name="Paulsen I.T."/>
            <person name="Nelson K.E."/>
            <person name="Tettelin H."/>
            <person name="Fouts D.E."/>
            <person name="Eisen J.A."/>
            <person name="Gill S.R."/>
            <person name="Holtzapple E.K."/>
            <person name="Okstad O.A."/>
            <person name="Helgason E."/>
            <person name="Rilstone J."/>
            <person name="Wu M."/>
            <person name="Kolonay J.F."/>
            <person name="Beanan M.J."/>
            <person name="Dodson R.J."/>
            <person name="Brinkac L.M."/>
            <person name="Gwinn M.L."/>
            <person name="DeBoy R.T."/>
            <person name="Madpu R."/>
            <person name="Daugherty S.C."/>
            <person name="Durkin A.S."/>
            <person name="Haft D.H."/>
            <person name="Nelson W.C."/>
            <person name="Peterson J.D."/>
            <person name="Pop M."/>
            <person name="Khouri H.M."/>
            <person name="Radune D."/>
            <person name="Benton J.L."/>
            <person name="Mahamoud Y."/>
            <person name="Jiang L."/>
            <person name="Hance I.R."/>
            <person name="Weidman J.F."/>
            <person name="Berry K.J."/>
            <person name="Plaut R.D."/>
            <person name="Wolf A.M."/>
            <person name="Watkins K.L."/>
            <person name="Nierman W.C."/>
            <person name="Hazen A."/>
            <person name="Cline R.T."/>
            <person name="Redmond C."/>
            <person name="Thwaite J.E."/>
            <person name="White O."/>
            <person name="Salzberg S.L."/>
            <person name="Thomason B."/>
            <person name="Friedlander A.M."/>
            <person name="Koehler T.M."/>
            <person name="Hanna P.C."/>
            <person name="Kolstoe A.-B."/>
            <person name="Fraser C.M."/>
        </authorList>
    </citation>
    <scope>NUCLEOTIDE SEQUENCE [LARGE SCALE GENOMIC DNA]</scope>
    <source>
        <strain>Ames / isolate Porton</strain>
    </source>
</reference>
<reference key="2">
    <citation type="submission" date="2004-01" db="EMBL/GenBank/DDBJ databases">
        <title>Complete genome sequence of Bacillus anthracis Sterne.</title>
        <authorList>
            <person name="Brettin T.S."/>
            <person name="Bruce D."/>
            <person name="Challacombe J.F."/>
            <person name="Gilna P."/>
            <person name="Han C."/>
            <person name="Hill K."/>
            <person name="Hitchcock P."/>
            <person name="Jackson P."/>
            <person name="Keim P."/>
            <person name="Longmire J."/>
            <person name="Lucas S."/>
            <person name="Okinaka R."/>
            <person name="Richardson P."/>
            <person name="Rubin E."/>
            <person name="Tice H."/>
        </authorList>
    </citation>
    <scope>NUCLEOTIDE SEQUENCE [LARGE SCALE GENOMIC DNA]</scope>
    <source>
        <strain>Sterne</strain>
    </source>
</reference>
<reference key="3">
    <citation type="journal article" date="2009" name="J. Bacteriol.">
        <title>The complete genome sequence of Bacillus anthracis Ames 'Ancestor'.</title>
        <authorList>
            <person name="Ravel J."/>
            <person name="Jiang L."/>
            <person name="Stanley S.T."/>
            <person name="Wilson M.R."/>
            <person name="Decker R.S."/>
            <person name="Read T.D."/>
            <person name="Worsham P."/>
            <person name="Keim P.S."/>
            <person name="Salzberg S.L."/>
            <person name="Fraser-Liggett C.M."/>
            <person name="Rasko D.A."/>
        </authorList>
    </citation>
    <scope>NUCLEOTIDE SEQUENCE [LARGE SCALE GENOMIC DNA]</scope>
    <source>
        <strain>Ames ancestor</strain>
    </source>
</reference>
<gene>
    <name type="ordered locus">BA_1211</name>
    <name type="ordered locus">GBAA_1211</name>
    <name type="ordered locus">BAS1118</name>
</gene>
<name>Y1118_BACAN</name>
<proteinExistence type="inferred from homology"/>
<accession>Q81TQ5</accession>
<accession>Q6I1Z0</accession>
<accession>Q6KVS9</accession>
<protein>
    <recommendedName>
        <fullName evidence="1">UPF0738 protein BA_1211/GBAA_1211/BAS1118</fullName>
    </recommendedName>
</protein>
<evidence type="ECO:0000255" key="1">
    <source>
        <dbReference type="HAMAP-Rule" id="MF_01861"/>
    </source>
</evidence>